<feature type="chain" id="PRO_0000406699" description="Pentafunctional AROM polypeptide">
    <location>
        <begin position="1"/>
        <end position="1538"/>
    </location>
</feature>
<feature type="region of interest" description="3-dehydroquinate synthase">
    <location>
        <begin position="1"/>
        <end position="384"/>
    </location>
</feature>
<feature type="region of interest" description="EPSP synthase">
    <location>
        <begin position="397"/>
        <end position="842"/>
    </location>
</feature>
<feature type="region of interest" description="Shikimate kinase">
    <location>
        <begin position="866"/>
        <end position="973"/>
    </location>
</feature>
<feature type="region of interest" description="3-dehydroquinase">
    <location>
        <begin position="974"/>
        <end position="1194"/>
    </location>
</feature>
<feature type="region of interest" description="Shikimate dehydrogenase">
    <location>
        <begin position="1207"/>
        <end position="1538"/>
    </location>
</feature>
<feature type="active site" description="Proton acceptor; for 3-dehydroquinate synthase activity" evidence="1">
    <location>
        <position position="260"/>
    </location>
</feature>
<feature type="active site" description="Proton acceptor; for 3-dehydroquinate synthase activity" evidence="1">
    <location>
        <position position="275"/>
    </location>
</feature>
<feature type="active site" description="For EPSP synthase activity" evidence="1">
    <location>
        <position position="824"/>
    </location>
</feature>
<feature type="active site" description="Proton acceptor; for 3-dehydroquinate dehydratase activity" evidence="1">
    <location>
        <position position="1097"/>
    </location>
</feature>
<feature type="active site" description="Schiff-base intermediate with substrate; for 3-dehydroquinate dehydratase activity" evidence="1">
    <location>
        <position position="1125"/>
    </location>
</feature>
<feature type="binding site" evidence="1">
    <location>
        <begin position="44"/>
        <end position="46"/>
    </location>
    <ligand>
        <name>NAD(+)</name>
        <dbReference type="ChEBI" id="CHEBI:57540"/>
    </ligand>
</feature>
<feature type="binding site" evidence="1">
    <location>
        <begin position="81"/>
        <end position="84"/>
    </location>
    <ligand>
        <name>NAD(+)</name>
        <dbReference type="ChEBI" id="CHEBI:57540"/>
    </ligand>
</feature>
<feature type="binding site" evidence="1">
    <location>
        <begin position="114"/>
        <end position="116"/>
    </location>
    <ligand>
        <name>NAD(+)</name>
        <dbReference type="ChEBI" id="CHEBI:57540"/>
    </ligand>
</feature>
<feature type="binding site" evidence="1">
    <location>
        <position position="119"/>
    </location>
    <ligand>
        <name>NAD(+)</name>
        <dbReference type="ChEBI" id="CHEBI:57540"/>
    </ligand>
</feature>
<feature type="binding site" evidence="1">
    <location>
        <position position="130"/>
    </location>
    <ligand>
        <name>7-phospho-2-dehydro-3-deoxy-D-arabino-heptonate</name>
        <dbReference type="ChEBI" id="CHEBI:58394"/>
    </ligand>
</feature>
<feature type="binding site" evidence="1">
    <location>
        <begin position="139"/>
        <end position="140"/>
    </location>
    <ligand>
        <name>NAD(+)</name>
        <dbReference type="ChEBI" id="CHEBI:57540"/>
    </ligand>
</feature>
<feature type="binding site" evidence="1">
    <location>
        <position position="146"/>
    </location>
    <ligand>
        <name>7-phospho-2-dehydro-3-deoxy-D-arabino-heptonate</name>
        <dbReference type="ChEBI" id="CHEBI:58394"/>
    </ligand>
</feature>
<feature type="binding site" evidence="1">
    <location>
        <position position="152"/>
    </location>
    <ligand>
        <name>7-phospho-2-dehydro-3-deoxy-D-arabino-heptonate</name>
        <dbReference type="ChEBI" id="CHEBI:58394"/>
    </ligand>
</feature>
<feature type="binding site" evidence="1">
    <location>
        <position position="161"/>
    </location>
    <ligand>
        <name>NAD(+)</name>
        <dbReference type="ChEBI" id="CHEBI:57540"/>
    </ligand>
</feature>
<feature type="binding site" evidence="1">
    <location>
        <position position="162"/>
    </location>
    <ligand>
        <name>7-phospho-2-dehydro-3-deoxy-D-arabino-heptonate</name>
        <dbReference type="ChEBI" id="CHEBI:58394"/>
    </ligand>
</feature>
<feature type="binding site" evidence="1">
    <location>
        <begin position="179"/>
        <end position="182"/>
    </location>
    <ligand>
        <name>NAD(+)</name>
        <dbReference type="ChEBI" id="CHEBI:57540"/>
    </ligand>
</feature>
<feature type="binding site" evidence="1">
    <location>
        <position position="190"/>
    </location>
    <ligand>
        <name>NAD(+)</name>
        <dbReference type="ChEBI" id="CHEBI:57540"/>
    </ligand>
</feature>
<feature type="binding site" evidence="1">
    <location>
        <begin position="194"/>
        <end position="197"/>
    </location>
    <ligand>
        <name>7-phospho-2-dehydro-3-deoxy-D-arabino-heptonate</name>
        <dbReference type="ChEBI" id="CHEBI:58394"/>
    </ligand>
</feature>
<feature type="binding site" evidence="1">
    <location>
        <position position="194"/>
    </location>
    <ligand>
        <name>Zn(2+)</name>
        <dbReference type="ChEBI" id="CHEBI:29105"/>
        <note>catalytic</note>
    </ligand>
</feature>
<feature type="binding site" evidence="1">
    <location>
        <position position="250"/>
    </location>
    <ligand>
        <name>7-phospho-2-dehydro-3-deoxy-D-arabino-heptonate</name>
        <dbReference type="ChEBI" id="CHEBI:58394"/>
    </ligand>
</feature>
<feature type="binding site" evidence="1">
    <location>
        <begin position="264"/>
        <end position="268"/>
    </location>
    <ligand>
        <name>7-phospho-2-dehydro-3-deoxy-D-arabino-heptonate</name>
        <dbReference type="ChEBI" id="CHEBI:58394"/>
    </ligand>
</feature>
<feature type="binding site" evidence="1">
    <location>
        <position position="271"/>
    </location>
    <ligand>
        <name>7-phospho-2-dehydro-3-deoxy-D-arabino-heptonate</name>
        <dbReference type="ChEBI" id="CHEBI:58394"/>
    </ligand>
</feature>
<feature type="binding site" evidence="1">
    <location>
        <position position="271"/>
    </location>
    <ligand>
        <name>Zn(2+)</name>
        <dbReference type="ChEBI" id="CHEBI:29105"/>
        <note>catalytic</note>
    </ligand>
</feature>
<feature type="binding site" evidence="1">
    <location>
        <position position="287"/>
    </location>
    <ligand>
        <name>7-phospho-2-dehydro-3-deoxy-D-arabino-heptonate</name>
        <dbReference type="ChEBI" id="CHEBI:58394"/>
    </ligand>
</feature>
<feature type="binding site" evidence="1">
    <location>
        <position position="287"/>
    </location>
    <ligand>
        <name>Zn(2+)</name>
        <dbReference type="ChEBI" id="CHEBI:29105"/>
        <note>catalytic</note>
    </ligand>
</feature>
<feature type="binding site" evidence="1">
    <location>
        <position position="356"/>
    </location>
    <ligand>
        <name>7-phospho-2-dehydro-3-deoxy-D-arabino-heptonate</name>
        <dbReference type="ChEBI" id="CHEBI:58394"/>
    </ligand>
</feature>
<feature type="binding site" evidence="1">
    <location>
        <begin position="872"/>
        <end position="879"/>
    </location>
    <ligand>
        <name>ATP</name>
        <dbReference type="ChEBI" id="CHEBI:30616"/>
    </ligand>
</feature>
<comment type="function">
    <text evidence="1">The AROM polypeptide catalyzes 5 consecutive enzymatic reactions in prechorismate polyaromatic amino acid biosynthesis.</text>
</comment>
<comment type="catalytic activity">
    <reaction evidence="1">
        <text>7-phospho-2-dehydro-3-deoxy-D-arabino-heptonate = 3-dehydroquinate + phosphate</text>
        <dbReference type="Rhea" id="RHEA:21968"/>
        <dbReference type="ChEBI" id="CHEBI:32364"/>
        <dbReference type="ChEBI" id="CHEBI:43474"/>
        <dbReference type="ChEBI" id="CHEBI:58394"/>
        <dbReference type="EC" id="4.2.3.4"/>
    </reaction>
</comment>
<comment type="catalytic activity">
    <reaction evidence="1">
        <text>3-dehydroquinate = 3-dehydroshikimate + H2O</text>
        <dbReference type="Rhea" id="RHEA:21096"/>
        <dbReference type="ChEBI" id="CHEBI:15377"/>
        <dbReference type="ChEBI" id="CHEBI:16630"/>
        <dbReference type="ChEBI" id="CHEBI:32364"/>
        <dbReference type="EC" id="4.2.1.10"/>
    </reaction>
</comment>
<comment type="catalytic activity">
    <reaction evidence="1">
        <text>shikimate + NADP(+) = 3-dehydroshikimate + NADPH + H(+)</text>
        <dbReference type="Rhea" id="RHEA:17737"/>
        <dbReference type="ChEBI" id="CHEBI:15378"/>
        <dbReference type="ChEBI" id="CHEBI:16630"/>
        <dbReference type="ChEBI" id="CHEBI:36208"/>
        <dbReference type="ChEBI" id="CHEBI:57783"/>
        <dbReference type="ChEBI" id="CHEBI:58349"/>
        <dbReference type="EC" id="1.1.1.25"/>
    </reaction>
</comment>
<comment type="catalytic activity">
    <reaction evidence="1">
        <text>shikimate + ATP = 3-phosphoshikimate + ADP + H(+)</text>
        <dbReference type="Rhea" id="RHEA:13121"/>
        <dbReference type="ChEBI" id="CHEBI:15378"/>
        <dbReference type="ChEBI" id="CHEBI:30616"/>
        <dbReference type="ChEBI" id="CHEBI:36208"/>
        <dbReference type="ChEBI" id="CHEBI:145989"/>
        <dbReference type="ChEBI" id="CHEBI:456216"/>
        <dbReference type="EC" id="2.7.1.71"/>
    </reaction>
</comment>
<comment type="catalytic activity">
    <reaction evidence="1">
        <text>3-phosphoshikimate + phosphoenolpyruvate = 5-O-(1-carboxyvinyl)-3-phosphoshikimate + phosphate</text>
        <dbReference type="Rhea" id="RHEA:21256"/>
        <dbReference type="ChEBI" id="CHEBI:43474"/>
        <dbReference type="ChEBI" id="CHEBI:57701"/>
        <dbReference type="ChEBI" id="CHEBI:58702"/>
        <dbReference type="ChEBI" id="CHEBI:145989"/>
        <dbReference type="EC" id="2.5.1.19"/>
    </reaction>
</comment>
<comment type="cofactor">
    <cofactor>
        <name>Zn(2+)</name>
        <dbReference type="ChEBI" id="CHEBI:29105"/>
    </cofactor>
    <text>Binds 2 Zn(2+) ions per subunit.</text>
</comment>
<comment type="pathway">
    <text evidence="1">Metabolic intermediate biosynthesis; chorismate biosynthesis; chorismate from D-erythrose 4-phosphate and phosphoenolpyruvate: step 2/7.</text>
</comment>
<comment type="pathway">
    <text evidence="1">Metabolic intermediate biosynthesis; chorismate biosynthesis; chorismate from D-erythrose 4-phosphate and phosphoenolpyruvate: step 3/7.</text>
</comment>
<comment type="pathway">
    <text evidence="1">Metabolic intermediate biosynthesis; chorismate biosynthesis; chorismate from D-erythrose 4-phosphate and phosphoenolpyruvate: step 4/7.</text>
</comment>
<comment type="pathway">
    <text evidence="1">Metabolic intermediate biosynthesis; chorismate biosynthesis; chorismate from D-erythrose 4-phosphate and phosphoenolpyruvate: step 5/7.</text>
</comment>
<comment type="pathway">
    <text evidence="1">Metabolic intermediate biosynthesis; chorismate biosynthesis; chorismate from D-erythrose 4-phosphate and phosphoenolpyruvate: step 6/7.</text>
</comment>
<comment type="subunit">
    <text evidence="1">Homodimer.</text>
</comment>
<comment type="subcellular location">
    <subcellularLocation>
        <location evidence="1">Cytoplasm</location>
    </subcellularLocation>
</comment>
<comment type="similarity">
    <text evidence="1">In the N-terminal section; belongs to the sugar phosphate cyclases superfamily. Dehydroquinate synthase family.</text>
</comment>
<comment type="similarity">
    <text evidence="1">In the 2nd section; belongs to the EPSP synthase family.</text>
</comment>
<comment type="similarity">
    <text evidence="1">In the 3rd section; belongs to the shikimate kinase family.</text>
</comment>
<comment type="similarity">
    <text evidence="1">In the 4th section; belongs to the type-I 3-dehydroquinase family.</text>
</comment>
<comment type="similarity">
    <text evidence="1">In the C-terminal section; belongs to the shikimate dehydrogenase family.</text>
</comment>
<gene>
    <name type="ORF">HCAG_06699</name>
</gene>
<organism>
    <name type="scientific">Ajellomyces capsulatus (strain NAm1 / WU24)</name>
    <name type="common">Darling's disease fungus</name>
    <name type="synonym">Histoplasma capsulatum</name>
    <dbReference type="NCBI Taxonomy" id="2059318"/>
    <lineage>
        <taxon>Eukaryota</taxon>
        <taxon>Fungi</taxon>
        <taxon>Dikarya</taxon>
        <taxon>Ascomycota</taxon>
        <taxon>Pezizomycotina</taxon>
        <taxon>Eurotiomycetes</taxon>
        <taxon>Eurotiomycetidae</taxon>
        <taxon>Onygenales</taxon>
        <taxon>Ajellomycetaceae</taxon>
        <taxon>Histoplasma</taxon>
    </lineage>
</organism>
<accession>A6R8Q8</accession>
<sequence length="1538" mass="167080">MGVPTKISILGRESIVADFGIWRNYVAKDLLSSCSSSTYVLISDTNLTPLYLEGFQKSFEDAATNVSPKPRLLTYEIPPGESSKSRETKADIEDWMLARQPPCGRDTVIIALGGGVIGDLIGFVAATYMRGVRFVQVPTTLLAMVDSSIGGKTAIDTPNGKNLIGAIWQPQRIYLDMEFLNTLPEREFINGMAEVIKTAAISSEEKFAALERDAETILAAVKSKNTPERPRFSGIEETLKRTILSSAEFKAQVVSADEREGGLRNLLNFGHSIGHAIEAILAPQVLHGECISIGMVKEAELARHLGILNNVSVSRISKCLANYGLPTSLKDQRIKKLTAGKHCSVEQLIAYMGVDKKNDGPKKKVVLLSAIGRTHEPRASTVSNEEIQIVLAPSIEVSPGVPKGLDVTCTPPGSKSISNRALVLAALGSGTCRLKNLLHSDDTEVMLNALERLGAATFSWEDEGEVLVVSGKGGRMEASSSELYVGNAGTASRFLTTVATLARKSSVDSSVLTGNARMKQRPIGDLVDALAANGASIEYLENLGCLPLKIAASGGFAGGEINLAAKVSSQYVSSLLMCAPYAKTPVTLRLVGGKPISQPYIDMTTAMMRSFGVEVKKSETEEHTYHIPLGFYTNPVEYIVESDASSATYPLAAAAITGTSCTVPNIGSKSLQGDARFAVDVLRPMGCAVDQNDFSTRVTGPPGGILSPLPNINMEPMTDAFLTASVLAAVARGKGSNRTTRIFGIANQRVKECNRIKAMKDELAKFGVVCREHDDGLEIDGIDRATLHHPSDGVYCYDDHRVAMSFSVLSLVAHEPTLILEKECVGKTWPGWWDCLSQTFKVKLDGKEVGKRTETNPIVHVNKSAASIFIIGMRGAGKTTSGFWVSKALQRPFIDLDDELERTEAYVEDMMSVWLRRKPWYEECSNVQYYSRLTGLDGMTQVSGGFNRFLKVITGEVDSLAKMRRKQNTFFVSLTLPDLGLAAHILKEVTLGSDAVELRVDLLKDPQSDNEIPSVDYVAEQISVLRSRTSVPLVFTIRTKGQGGRFPDDAYDAALQLYRLAVRMGSEFVDLEISFPEQLLRTVTEMKGFSTIIASHHDPKGQLSWVNGSWIQFYNKALQYGDVIKLVGVARSIDDNISLKKFKTWAEEKHNIPIIAINMGDKGQLSRMLNGFMTPVSHPSLPFKAAPGQLSAREIRKGLSLIGEIKAKKFAVIGNPVSASRSPAMHNTLFRQMGLPHTYGTLETDNPEVAKEFIRSPGFGGASVTIPLKLSIMPLLDEIAPEAMSIGAVNTIVCAPPAPDSKSQTPRLIGHNTDWQGMVRCLSDAGAYAAATPTTASAGLVIGGGGTARAAIFALQNMGYSPIYVLGRSPDKLSSMTSTFHTDHDIRILEDVKALESLPTVAIGTIPGDKPIEPHMREILCKLFDLCEKANSDTEQARGVSTKRILLEMAYKPSVTSLMQLASDSGWTVLPGLEALVAQGVYQCEYWTNITPVYEYARCWKVYDVKLINCERGNAISLLVLEAFTHAFYEHPVLNHSS</sequence>
<proteinExistence type="inferred from homology"/>
<reference key="1">
    <citation type="journal article" date="2009" name="Genome Res.">
        <title>Comparative genomic analyses of the human fungal pathogens Coccidioides and their relatives.</title>
        <authorList>
            <person name="Sharpton T.J."/>
            <person name="Stajich J.E."/>
            <person name="Rounsley S.D."/>
            <person name="Gardner M.J."/>
            <person name="Wortman J.R."/>
            <person name="Jordar V.S."/>
            <person name="Maiti R."/>
            <person name="Kodira C.D."/>
            <person name="Neafsey D.E."/>
            <person name="Zeng Q."/>
            <person name="Hung C.-Y."/>
            <person name="McMahan C."/>
            <person name="Muszewska A."/>
            <person name="Grynberg M."/>
            <person name="Mandel M.A."/>
            <person name="Kellner E.M."/>
            <person name="Barker B.M."/>
            <person name="Galgiani J.N."/>
            <person name="Orbach M.J."/>
            <person name="Kirkland T.N."/>
            <person name="Cole G.T."/>
            <person name="Henn M.R."/>
            <person name="Birren B.W."/>
            <person name="Taylor J.W."/>
        </authorList>
    </citation>
    <scope>NUCLEOTIDE SEQUENCE [LARGE SCALE GENOMIC DNA]</scope>
    <source>
        <strain>NAm1 / WU24</strain>
    </source>
</reference>
<keyword id="KW-0028">Amino-acid biosynthesis</keyword>
<keyword id="KW-0057">Aromatic amino acid biosynthesis</keyword>
<keyword id="KW-0067">ATP-binding</keyword>
<keyword id="KW-0963">Cytoplasm</keyword>
<keyword id="KW-0418">Kinase</keyword>
<keyword id="KW-0456">Lyase</keyword>
<keyword id="KW-0479">Metal-binding</keyword>
<keyword id="KW-0511">Multifunctional enzyme</keyword>
<keyword id="KW-0521">NADP</keyword>
<keyword id="KW-0547">Nucleotide-binding</keyword>
<keyword id="KW-0560">Oxidoreductase</keyword>
<keyword id="KW-1185">Reference proteome</keyword>
<keyword id="KW-0808">Transferase</keyword>
<keyword id="KW-0862">Zinc</keyword>
<evidence type="ECO:0000255" key="1">
    <source>
        <dbReference type="HAMAP-Rule" id="MF_03143"/>
    </source>
</evidence>
<name>ARO1_AJECN</name>
<dbReference type="EC" id="4.2.3.4" evidence="1"/>
<dbReference type="EC" id="2.5.1.19" evidence="1"/>
<dbReference type="EC" id="2.7.1.71" evidence="1"/>
<dbReference type="EC" id="4.2.1.10" evidence="1"/>
<dbReference type="EC" id="1.1.1.25" evidence="1"/>
<dbReference type="EMBL" id="CH476660">
    <property type="protein sequence ID" value="EDN09532.1"/>
    <property type="molecule type" value="Genomic_DNA"/>
</dbReference>
<dbReference type="RefSeq" id="XP_001539094.1">
    <property type="nucleotide sequence ID" value="XM_001539044.1"/>
</dbReference>
<dbReference type="SMR" id="A6R8Q8"/>
<dbReference type="STRING" id="339724.A6R8Q8"/>
<dbReference type="GeneID" id="5445226"/>
<dbReference type="KEGG" id="aje:HCAG_06699"/>
<dbReference type="VEuPathDB" id="FungiDB:HCAG_06699"/>
<dbReference type="HOGENOM" id="CLU_001201_1_2_1"/>
<dbReference type="OMA" id="SWANMSW"/>
<dbReference type="OrthoDB" id="3817at299071"/>
<dbReference type="UniPathway" id="UPA00053">
    <property type="reaction ID" value="UER00085"/>
</dbReference>
<dbReference type="UniPathway" id="UPA00053">
    <property type="reaction ID" value="UER00086"/>
</dbReference>
<dbReference type="UniPathway" id="UPA00053">
    <property type="reaction ID" value="UER00087"/>
</dbReference>
<dbReference type="UniPathway" id="UPA00053">
    <property type="reaction ID" value="UER00088"/>
</dbReference>
<dbReference type="UniPathway" id="UPA00053">
    <property type="reaction ID" value="UER00089"/>
</dbReference>
<dbReference type="Proteomes" id="UP000009297">
    <property type="component" value="Unassembled WGS sequence"/>
</dbReference>
<dbReference type="GO" id="GO:0005737">
    <property type="term" value="C:cytoplasm"/>
    <property type="evidence" value="ECO:0007669"/>
    <property type="project" value="UniProtKB-SubCell"/>
</dbReference>
<dbReference type="GO" id="GO:0003855">
    <property type="term" value="F:3-dehydroquinate dehydratase activity"/>
    <property type="evidence" value="ECO:0007669"/>
    <property type="project" value="UniProtKB-UniRule"/>
</dbReference>
<dbReference type="GO" id="GO:0003856">
    <property type="term" value="F:3-dehydroquinate synthase activity"/>
    <property type="evidence" value="ECO:0007669"/>
    <property type="project" value="UniProtKB-UniRule"/>
</dbReference>
<dbReference type="GO" id="GO:0003866">
    <property type="term" value="F:3-phosphoshikimate 1-carboxyvinyltransferase activity"/>
    <property type="evidence" value="ECO:0007669"/>
    <property type="project" value="UniProtKB-UniRule"/>
</dbReference>
<dbReference type="GO" id="GO:0005524">
    <property type="term" value="F:ATP binding"/>
    <property type="evidence" value="ECO:0007669"/>
    <property type="project" value="UniProtKB-UniRule"/>
</dbReference>
<dbReference type="GO" id="GO:0046872">
    <property type="term" value="F:metal ion binding"/>
    <property type="evidence" value="ECO:0007669"/>
    <property type="project" value="UniProtKB-UniRule"/>
</dbReference>
<dbReference type="GO" id="GO:0004764">
    <property type="term" value="F:shikimate 3-dehydrogenase (NADP+) activity"/>
    <property type="evidence" value="ECO:0007669"/>
    <property type="project" value="UniProtKB-UniRule"/>
</dbReference>
<dbReference type="GO" id="GO:0004765">
    <property type="term" value="F:shikimate kinase activity"/>
    <property type="evidence" value="ECO:0007669"/>
    <property type="project" value="UniProtKB-UniRule"/>
</dbReference>
<dbReference type="GO" id="GO:0008652">
    <property type="term" value="P:amino acid biosynthetic process"/>
    <property type="evidence" value="ECO:0007669"/>
    <property type="project" value="UniProtKB-KW"/>
</dbReference>
<dbReference type="GO" id="GO:0009073">
    <property type="term" value="P:aromatic amino acid family biosynthetic process"/>
    <property type="evidence" value="ECO:0007669"/>
    <property type="project" value="UniProtKB-UniRule"/>
</dbReference>
<dbReference type="GO" id="GO:0009423">
    <property type="term" value="P:chorismate biosynthetic process"/>
    <property type="evidence" value="ECO:0007669"/>
    <property type="project" value="UniProtKB-UniRule"/>
</dbReference>
<dbReference type="CDD" id="cd00502">
    <property type="entry name" value="DHQase_I"/>
    <property type="match status" value="1"/>
</dbReference>
<dbReference type="CDD" id="cd08195">
    <property type="entry name" value="DHQS"/>
    <property type="match status" value="1"/>
</dbReference>
<dbReference type="CDD" id="cd01556">
    <property type="entry name" value="EPSP_synthase"/>
    <property type="match status" value="1"/>
</dbReference>
<dbReference type="CDD" id="cd01065">
    <property type="entry name" value="NAD_bind_Shikimate_DH"/>
    <property type="match status" value="1"/>
</dbReference>
<dbReference type="FunFam" id="1.20.1090.10:FF:000007">
    <property type="entry name" value="Pentafunctional AROM polypeptide"/>
    <property type="match status" value="1"/>
</dbReference>
<dbReference type="FunFam" id="3.20.20.70:FF:000135">
    <property type="entry name" value="Pentafunctional AROM polypeptide"/>
    <property type="match status" value="1"/>
</dbReference>
<dbReference type="FunFam" id="3.40.50.1970:FF:000007">
    <property type="entry name" value="Pentafunctional AROM polypeptide"/>
    <property type="match status" value="1"/>
</dbReference>
<dbReference type="FunFam" id="3.65.10.10:FF:000007">
    <property type="entry name" value="Pentafunctional AROM polypeptide"/>
    <property type="match status" value="1"/>
</dbReference>
<dbReference type="FunFam" id="3.65.10.10:FF:000008">
    <property type="entry name" value="Pentafunctional AROM polypeptide"/>
    <property type="match status" value="1"/>
</dbReference>
<dbReference type="Gene3D" id="3.40.50.1970">
    <property type="match status" value="1"/>
</dbReference>
<dbReference type="Gene3D" id="3.20.20.70">
    <property type="entry name" value="Aldolase class I"/>
    <property type="match status" value="1"/>
</dbReference>
<dbReference type="Gene3D" id="1.20.1090.10">
    <property type="entry name" value="Dehydroquinate synthase-like - alpha domain"/>
    <property type="match status" value="1"/>
</dbReference>
<dbReference type="Gene3D" id="3.65.10.10">
    <property type="entry name" value="Enolpyruvate transferase domain"/>
    <property type="match status" value="2"/>
</dbReference>
<dbReference type="Gene3D" id="3.40.50.10860">
    <property type="entry name" value="Leucine Dehydrogenase, chain A, domain 1"/>
    <property type="match status" value="1"/>
</dbReference>
<dbReference type="Gene3D" id="3.40.50.720">
    <property type="entry name" value="NAD(P)-binding Rossmann-like Domain"/>
    <property type="match status" value="1"/>
</dbReference>
<dbReference type="Gene3D" id="3.40.50.300">
    <property type="entry name" value="P-loop containing nucleotide triphosphate hydrolases"/>
    <property type="match status" value="1"/>
</dbReference>
<dbReference type="HAMAP" id="MF_00210">
    <property type="entry name" value="EPSP_synth"/>
    <property type="match status" value="1"/>
</dbReference>
<dbReference type="HAMAP" id="MF_03143">
    <property type="entry name" value="Pentafunct_AroM"/>
    <property type="match status" value="1"/>
</dbReference>
<dbReference type="InterPro" id="IPR018508">
    <property type="entry name" value="3-dehydroquinate_DH_AS"/>
</dbReference>
<dbReference type="InterPro" id="IPR013785">
    <property type="entry name" value="Aldolase_TIM"/>
</dbReference>
<dbReference type="InterPro" id="IPR046346">
    <property type="entry name" value="Aminoacid_DH-like_N_sf"/>
</dbReference>
<dbReference type="InterPro" id="IPR016037">
    <property type="entry name" value="DHQ_synth_AroB"/>
</dbReference>
<dbReference type="InterPro" id="IPR030960">
    <property type="entry name" value="DHQS/DOIS_N"/>
</dbReference>
<dbReference type="InterPro" id="IPR056179">
    <property type="entry name" value="DHQS_C"/>
</dbReference>
<dbReference type="InterPro" id="IPR001381">
    <property type="entry name" value="DHquinase_I"/>
</dbReference>
<dbReference type="InterPro" id="IPR001986">
    <property type="entry name" value="Enolpyruvate_Tfrase_dom"/>
</dbReference>
<dbReference type="InterPro" id="IPR036968">
    <property type="entry name" value="Enolpyruvate_Tfrase_sf"/>
</dbReference>
<dbReference type="InterPro" id="IPR006264">
    <property type="entry name" value="EPSP_synthase"/>
</dbReference>
<dbReference type="InterPro" id="IPR023193">
    <property type="entry name" value="EPSP_synthase_CS"/>
</dbReference>
<dbReference type="InterPro" id="IPR036291">
    <property type="entry name" value="NAD(P)-bd_dom_sf"/>
</dbReference>
<dbReference type="InterPro" id="IPR027417">
    <property type="entry name" value="P-loop_NTPase"/>
</dbReference>
<dbReference type="InterPro" id="IPR008289">
    <property type="entry name" value="Pentafunct_AroM"/>
</dbReference>
<dbReference type="InterPro" id="IPR013792">
    <property type="entry name" value="RNA3'P_cycl/enolpyr_Trfase_a/b"/>
</dbReference>
<dbReference type="InterPro" id="IPR031322">
    <property type="entry name" value="Shikimate/glucono_kinase"/>
</dbReference>
<dbReference type="InterPro" id="IPR013708">
    <property type="entry name" value="Shikimate_DH-bd_N"/>
</dbReference>
<dbReference type="InterPro" id="IPR010110">
    <property type="entry name" value="Shikimate_DH_AroM-type"/>
</dbReference>
<dbReference type="NCBIfam" id="TIGR01356">
    <property type="entry name" value="aroA"/>
    <property type="match status" value="1"/>
</dbReference>
<dbReference type="NCBIfam" id="TIGR01357">
    <property type="entry name" value="aroB"/>
    <property type="match status" value="1"/>
</dbReference>
<dbReference type="NCBIfam" id="TIGR01093">
    <property type="entry name" value="aroD"/>
    <property type="match status" value="1"/>
</dbReference>
<dbReference type="NCBIfam" id="TIGR01809">
    <property type="entry name" value="Shik-DH-AROM"/>
    <property type="match status" value="1"/>
</dbReference>
<dbReference type="PANTHER" id="PTHR21090">
    <property type="entry name" value="AROM/DEHYDROQUINATE SYNTHASE"/>
    <property type="match status" value="1"/>
</dbReference>
<dbReference type="PANTHER" id="PTHR21090:SF5">
    <property type="entry name" value="PENTAFUNCTIONAL AROM POLYPEPTIDE"/>
    <property type="match status" value="1"/>
</dbReference>
<dbReference type="Pfam" id="PF01761">
    <property type="entry name" value="DHQ_synthase"/>
    <property type="match status" value="1"/>
</dbReference>
<dbReference type="Pfam" id="PF24621">
    <property type="entry name" value="DHQS_C"/>
    <property type="match status" value="1"/>
</dbReference>
<dbReference type="Pfam" id="PF01487">
    <property type="entry name" value="DHquinase_I"/>
    <property type="match status" value="1"/>
</dbReference>
<dbReference type="Pfam" id="PF00275">
    <property type="entry name" value="EPSP_synthase"/>
    <property type="match status" value="1"/>
</dbReference>
<dbReference type="Pfam" id="PF08501">
    <property type="entry name" value="Shikimate_dh_N"/>
    <property type="match status" value="1"/>
</dbReference>
<dbReference type="Pfam" id="PF01202">
    <property type="entry name" value="SKI"/>
    <property type="match status" value="1"/>
</dbReference>
<dbReference type="PIRSF" id="PIRSF000514">
    <property type="entry name" value="Pentafunct_AroM"/>
    <property type="match status" value="1"/>
</dbReference>
<dbReference type="PRINTS" id="PR01100">
    <property type="entry name" value="SHIKIMTKNASE"/>
</dbReference>
<dbReference type="SUPFAM" id="SSF51569">
    <property type="entry name" value="Aldolase"/>
    <property type="match status" value="1"/>
</dbReference>
<dbReference type="SUPFAM" id="SSF53223">
    <property type="entry name" value="Aminoacid dehydrogenase-like, N-terminal domain"/>
    <property type="match status" value="1"/>
</dbReference>
<dbReference type="SUPFAM" id="SSF56796">
    <property type="entry name" value="Dehydroquinate synthase-like"/>
    <property type="match status" value="1"/>
</dbReference>
<dbReference type="SUPFAM" id="SSF55205">
    <property type="entry name" value="EPT/RTPC-like"/>
    <property type="match status" value="1"/>
</dbReference>
<dbReference type="SUPFAM" id="SSF51735">
    <property type="entry name" value="NAD(P)-binding Rossmann-fold domains"/>
    <property type="match status" value="1"/>
</dbReference>
<dbReference type="SUPFAM" id="SSF52540">
    <property type="entry name" value="P-loop containing nucleoside triphosphate hydrolases"/>
    <property type="match status" value="1"/>
</dbReference>
<dbReference type="PROSITE" id="PS01028">
    <property type="entry name" value="DEHYDROQUINASE_I"/>
    <property type="match status" value="1"/>
</dbReference>
<dbReference type="PROSITE" id="PS00104">
    <property type="entry name" value="EPSP_SYNTHASE_1"/>
    <property type="match status" value="1"/>
</dbReference>
<dbReference type="PROSITE" id="PS00885">
    <property type="entry name" value="EPSP_SYNTHASE_2"/>
    <property type="match status" value="1"/>
</dbReference>
<protein>
    <recommendedName>
        <fullName evidence="1">Pentafunctional AROM polypeptide</fullName>
    </recommendedName>
    <domain>
        <recommendedName>
            <fullName evidence="1">3-dehydroquinate synthase</fullName>
            <shortName evidence="1">DHQS</shortName>
            <ecNumber evidence="1">4.2.3.4</ecNumber>
        </recommendedName>
    </domain>
    <domain>
        <recommendedName>
            <fullName evidence="1">3-phosphoshikimate 1-carboxyvinyltransferase</fullName>
            <ecNumber evidence="1">2.5.1.19</ecNumber>
        </recommendedName>
        <alternativeName>
            <fullName evidence="1">5-enolpyruvylshikimate-3-phosphate synthase</fullName>
            <shortName evidence="1">EPSP synthase</shortName>
            <shortName evidence="1">EPSPS</shortName>
        </alternativeName>
    </domain>
    <domain>
        <recommendedName>
            <fullName evidence="1">Shikimate kinase</fullName>
            <shortName evidence="1">SK</shortName>
            <ecNumber evidence="1">2.7.1.71</ecNumber>
        </recommendedName>
    </domain>
    <domain>
        <recommendedName>
            <fullName evidence="1">3-dehydroquinate dehydratase</fullName>
            <shortName evidence="1">3-dehydroquinase</shortName>
            <ecNumber evidence="1">4.2.1.10</ecNumber>
        </recommendedName>
    </domain>
    <domain>
        <recommendedName>
            <fullName evidence="1">Shikimate dehydrogenase</fullName>
            <ecNumber evidence="1">1.1.1.25</ecNumber>
        </recommendedName>
    </domain>
</protein>